<feature type="chain" id="PRO_0000112846" description="Auxin-responsive protein IAA15">
    <location>
        <begin position="1"/>
        <end position="179"/>
    </location>
</feature>
<feature type="domain" description="PB1" evidence="2">
    <location>
        <begin position="86"/>
        <end position="173"/>
    </location>
</feature>
<feature type="short sequence motif" description="EAR-like (transcriptional repression)">
    <location>
        <begin position="21"/>
        <end position="25"/>
    </location>
</feature>
<dbReference type="EMBL" id="AJ441300">
    <property type="protein sequence ID" value="CAD29668.1"/>
    <property type="molecule type" value="mRNA"/>
</dbReference>
<dbReference type="EMBL" id="AC018848">
    <property type="protein sequence ID" value="AAG52443.1"/>
    <property type="molecule type" value="Genomic_DNA"/>
</dbReference>
<dbReference type="EMBL" id="CP002684">
    <property type="status" value="NOT_ANNOTATED_CDS"/>
    <property type="molecule type" value="Genomic_DNA"/>
</dbReference>
<dbReference type="PIR" id="F96835">
    <property type="entry name" value="F96835"/>
</dbReference>
<dbReference type="PIR" id="S58502">
    <property type="entry name" value="S58502"/>
</dbReference>
<dbReference type="SMR" id="Q9C966"/>
<dbReference type="BioGRID" id="29597">
    <property type="interactions" value="45"/>
</dbReference>
<dbReference type="ELM" id="Q9C966"/>
<dbReference type="FunCoup" id="Q9C966">
    <property type="interactions" value="2"/>
</dbReference>
<dbReference type="IntAct" id="Q9C966">
    <property type="interactions" value="26"/>
</dbReference>
<dbReference type="STRING" id="3702.Q9C966"/>
<dbReference type="PaxDb" id="3702-AT1G80390.1"/>
<dbReference type="Araport" id="AT1G80390"/>
<dbReference type="TAIR" id="AT1G80390">
    <property type="gene designation" value="IAA15"/>
</dbReference>
<dbReference type="eggNOG" id="ENOG502RYMU">
    <property type="taxonomic scope" value="Eukaryota"/>
</dbReference>
<dbReference type="HOGENOM" id="CLU_049393_1_4_1"/>
<dbReference type="InParanoid" id="Q9C966"/>
<dbReference type="PhylomeDB" id="Q9C966"/>
<dbReference type="PRO" id="PR:Q9C966"/>
<dbReference type="Proteomes" id="UP000006548">
    <property type="component" value="Chromosome 1"/>
</dbReference>
<dbReference type="ExpressionAtlas" id="Q9C966">
    <property type="expression patterns" value="baseline and differential"/>
</dbReference>
<dbReference type="GO" id="GO:0005634">
    <property type="term" value="C:nucleus"/>
    <property type="evidence" value="ECO:0007669"/>
    <property type="project" value="UniProtKB-SubCell"/>
</dbReference>
<dbReference type="GO" id="GO:0003700">
    <property type="term" value="F:DNA-binding transcription factor activity"/>
    <property type="evidence" value="ECO:0000250"/>
    <property type="project" value="TAIR"/>
</dbReference>
<dbReference type="GO" id="GO:0009734">
    <property type="term" value="P:auxin-activated signaling pathway"/>
    <property type="evidence" value="ECO:0007669"/>
    <property type="project" value="UniProtKB-KW"/>
</dbReference>
<dbReference type="GO" id="GO:0006355">
    <property type="term" value="P:regulation of DNA-templated transcription"/>
    <property type="evidence" value="ECO:0000304"/>
    <property type="project" value="TAIR"/>
</dbReference>
<dbReference type="GO" id="GO:0009733">
    <property type="term" value="P:response to auxin"/>
    <property type="evidence" value="ECO:0000304"/>
    <property type="project" value="TAIR"/>
</dbReference>
<dbReference type="Gene3D" id="3.10.20.90">
    <property type="entry name" value="Phosphatidylinositol 3-kinase Catalytic Subunit, Chain A, domain 1"/>
    <property type="match status" value="1"/>
</dbReference>
<dbReference type="InterPro" id="IPR033389">
    <property type="entry name" value="AUX/IAA_dom"/>
</dbReference>
<dbReference type="InterPro" id="IPR003311">
    <property type="entry name" value="AUX_IAA"/>
</dbReference>
<dbReference type="InterPro" id="IPR053793">
    <property type="entry name" value="PB1-like"/>
</dbReference>
<dbReference type="PANTHER" id="PTHR31734:SF34">
    <property type="entry name" value="AUXIN-RESPONSIVE PROTEIN IAA15"/>
    <property type="match status" value="1"/>
</dbReference>
<dbReference type="PANTHER" id="PTHR31734">
    <property type="entry name" value="AUXIN-RESPONSIVE PROTEIN IAA17"/>
    <property type="match status" value="1"/>
</dbReference>
<dbReference type="Pfam" id="PF02309">
    <property type="entry name" value="AUX_IAA"/>
    <property type="match status" value="1"/>
</dbReference>
<dbReference type="SUPFAM" id="SSF54277">
    <property type="entry name" value="CAD &amp; PB1 domains"/>
    <property type="match status" value="1"/>
</dbReference>
<dbReference type="PROSITE" id="PS51745">
    <property type="entry name" value="PB1"/>
    <property type="match status" value="1"/>
</dbReference>
<reference key="1">
    <citation type="submission" date="2002-04" db="EMBL/GenBank/DDBJ databases">
        <title>Nucleotide sequence of the putative Arabidopsis IAA21.</title>
        <authorList>
            <person name="Sessa G."/>
            <person name="Carabelli M."/>
            <person name="Ciarbelli A.R."/>
            <person name="Ruzza V."/>
            <person name="Steindler C."/>
            <person name="Ruberti I."/>
        </authorList>
    </citation>
    <scope>NUCLEOTIDE SEQUENCE [MRNA]</scope>
    <source>
        <strain>cv. Columbia</strain>
    </source>
</reference>
<reference key="2">
    <citation type="journal article" date="2000" name="Nature">
        <title>Sequence and analysis of chromosome 1 of the plant Arabidopsis thaliana.</title>
        <authorList>
            <person name="Theologis A."/>
            <person name="Ecker J.R."/>
            <person name="Palm C.J."/>
            <person name="Federspiel N.A."/>
            <person name="Kaul S."/>
            <person name="White O."/>
            <person name="Alonso J."/>
            <person name="Altafi H."/>
            <person name="Araujo R."/>
            <person name="Bowman C.L."/>
            <person name="Brooks S.Y."/>
            <person name="Buehler E."/>
            <person name="Chan A."/>
            <person name="Chao Q."/>
            <person name="Chen H."/>
            <person name="Cheuk R.F."/>
            <person name="Chin C.W."/>
            <person name="Chung M.K."/>
            <person name="Conn L."/>
            <person name="Conway A.B."/>
            <person name="Conway A.R."/>
            <person name="Creasy T.H."/>
            <person name="Dewar K."/>
            <person name="Dunn P."/>
            <person name="Etgu P."/>
            <person name="Feldblyum T.V."/>
            <person name="Feng J.-D."/>
            <person name="Fong B."/>
            <person name="Fujii C.Y."/>
            <person name="Gill J.E."/>
            <person name="Goldsmith A.D."/>
            <person name="Haas B."/>
            <person name="Hansen N.F."/>
            <person name="Hughes B."/>
            <person name="Huizar L."/>
            <person name="Hunter J.L."/>
            <person name="Jenkins J."/>
            <person name="Johnson-Hopson C."/>
            <person name="Khan S."/>
            <person name="Khaykin E."/>
            <person name="Kim C.J."/>
            <person name="Koo H.L."/>
            <person name="Kremenetskaia I."/>
            <person name="Kurtz D.B."/>
            <person name="Kwan A."/>
            <person name="Lam B."/>
            <person name="Langin-Hooper S."/>
            <person name="Lee A."/>
            <person name="Lee J.M."/>
            <person name="Lenz C.A."/>
            <person name="Li J.H."/>
            <person name="Li Y.-P."/>
            <person name="Lin X."/>
            <person name="Liu S.X."/>
            <person name="Liu Z.A."/>
            <person name="Luros J.S."/>
            <person name="Maiti R."/>
            <person name="Marziali A."/>
            <person name="Militscher J."/>
            <person name="Miranda M."/>
            <person name="Nguyen M."/>
            <person name="Nierman W.C."/>
            <person name="Osborne B.I."/>
            <person name="Pai G."/>
            <person name="Peterson J."/>
            <person name="Pham P.K."/>
            <person name="Rizzo M."/>
            <person name="Rooney T."/>
            <person name="Rowley D."/>
            <person name="Sakano H."/>
            <person name="Salzberg S.L."/>
            <person name="Schwartz J.R."/>
            <person name="Shinn P."/>
            <person name="Southwick A.M."/>
            <person name="Sun H."/>
            <person name="Tallon L.J."/>
            <person name="Tambunga G."/>
            <person name="Toriumi M.J."/>
            <person name="Town C.D."/>
            <person name="Utterback T."/>
            <person name="Van Aken S."/>
            <person name="Vaysberg M."/>
            <person name="Vysotskaia V.S."/>
            <person name="Walker M."/>
            <person name="Wu D."/>
            <person name="Yu G."/>
            <person name="Fraser C.M."/>
            <person name="Venter J.C."/>
            <person name="Davis R.W."/>
        </authorList>
    </citation>
    <scope>NUCLEOTIDE SEQUENCE [LARGE SCALE GENOMIC DNA]</scope>
    <source>
        <strain>cv. Columbia</strain>
    </source>
</reference>
<reference key="3">
    <citation type="journal article" date="2017" name="Plant J.">
        <title>Araport11: a complete reannotation of the Arabidopsis thaliana reference genome.</title>
        <authorList>
            <person name="Cheng C.Y."/>
            <person name="Krishnakumar V."/>
            <person name="Chan A.P."/>
            <person name="Thibaud-Nissen F."/>
            <person name="Schobel S."/>
            <person name="Town C.D."/>
        </authorList>
    </citation>
    <scope>GENOME REANNOTATION</scope>
    <source>
        <strain>cv. Columbia</strain>
    </source>
</reference>
<reference key="4">
    <citation type="journal article" date="2002" name="Plant Mol. Biol.">
        <title>Genetics of Aux/IAA and ARF action in plant growth and development.</title>
        <authorList>
            <person name="Liscum E."/>
            <person name="Reed J.W."/>
        </authorList>
    </citation>
    <scope>GENE FAMILY</scope>
    <scope>NOMENCLATURE</scope>
    <scope>FUNCTION</scope>
</reference>
<reference key="5">
    <citation type="journal article" date="2004" name="Plant Cell">
        <title>Aux/IAA proteins contain a potent transcriptional repression domain.</title>
        <authorList>
            <person name="Tiwari S.B."/>
            <person name="Hagen G."/>
            <person name="Guilfoyle T.J."/>
        </authorList>
    </citation>
    <scope>TRANSCRIPTIONAL REPRESSION DOMAIN</scope>
</reference>
<keyword id="KW-0927">Auxin signaling pathway</keyword>
<keyword id="KW-0539">Nucleus</keyword>
<keyword id="KW-1185">Reference proteome</keyword>
<keyword id="KW-0678">Repressor</keyword>
<keyword id="KW-0804">Transcription</keyword>
<keyword id="KW-0805">Transcription regulation</keyword>
<name>IAA15_ARATH</name>
<accession>Q9C966</accession>
<sequence>MSPEEYVRVWPDSGDLGGTELTLALPGTPTNASEGPKKFGNKRRFLETVDLKLGEAHENNYISSMVTNDQLVGWPPVATARKTVRRKYVKVALDGAAYLRKVDLGMYDCYGQLFTALENMFQGIITICRVTELERKGEFVATYEDKDGDLMLVGDVPWMMFVESCKRMRLMKTGDAIGL</sequence>
<comment type="function">
    <text evidence="3">Aux/IAA proteins are short-lived transcriptional factors that function as repressors of early auxin response genes at low auxin concentrations. Repression is thought to result from the interaction with auxin response factors (ARFs), proteins that bind to the auxin-responsive promoter element (AuxRE). Formation of heterodimers with ARF proteins may alter their ability to modulate early auxin response genes expression.</text>
</comment>
<comment type="subunit">
    <text evidence="1">Homodimers and heterodimers.</text>
</comment>
<comment type="subcellular location">
    <subcellularLocation>
        <location evidence="1">Nucleus</location>
    </subcellularLocation>
</comment>
<comment type="induction">
    <text evidence="1">By auxin.</text>
</comment>
<comment type="domain">
    <text>The N-terminal half of the protein contains two conserved domains I and II. Domain I includes a slightly degenerated ERF-associated amphiphilic repression (EAR) motif which seems to be involved in the activity of transcriptional repression. Domain II is required for the correct degradation of the protein through the SCF-mediated ubiquitin-proteasome pathway. Interactions between Aux/IAA proteins and auxin response factors (ARFs) occur through their C-terminal dimerization domains III and IV.</text>
</comment>
<comment type="similarity">
    <text evidence="4">Belongs to the Aux/IAA family.</text>
</comment>
<comment type="caution">
    <text evidence="4">Was originally (Ref.1) erroneously named IAA21.</text>
</comment>
<proteinExistence type="evidence at transcript level"/>
<organism>
    <name type="scientific">Arabidopsis thaliana</name>
    <name type="common">Mouse-ear cress</name>
    <dbReference type="NCBI Taxonomy" id="3702"/>
    <lineage>
        <taxon>Eukaryota</taxon>
        <taxon>Viridiplantae</taxon>
        <taxon>Streptophyta</taxon>
        <taxon>Embryophyta</taxon>
        <taxon>Tracheophyta</taxon>
        <taxon>Spermatophyta</taxon>
        <taxon>Magnoliopsida</taxon>
        <taxon>eudicotyledons</taxon>
        <taxon>Gunneridae</taxon>
        <taxon>Pentapetalae</taxon>
        <taxon>rosids</taxon>
        <taxon>malvids</taxon>
        <taxon>Brassicales</taxon>
        <taxon>Brassicaceae</taxon>
        <taxon>Camelineae</taxon>
        <taxon>Arabidopsis</taxon>
    </lineage>
</organism>
<gene>
    <name type="primary">IAA15</name>
    <name type="ordered locus">At1g80390</name>
    <name type="ORF">F5I6.14</name>
</gene>
<protein>
    <recommendedName>
        <fullName>Auxin-responsive protein IAA15</fullName>
    </recommendedName>
    <alternativeName>
        <fullName>Indoleacetic acid-induced protein 15</fullName>
    </alternativeName>
</protein>
<evidence type="ECO:0000250" key="1"/>
<evidence type="ECO:0000255" key="2">
    <source>
        <dbReference type="PROSITE-ProRule" id="PRU01081"/>
    </source>
</evidence>
<evidence type="ECO:0000269" key="3">
    <source>
    </source>
</evidence>
<evidence type="ECO:0000305" key="4"/>